<protein>
    <recommendedName>
        <fullName>Homoprotocatechuate catabolism bifunctional isomerase/decarboxylase</fullName>
    </recommendedName>
    <domain>
        <recommendedName>
            <fullName evidence="3">2-hydroxyhepta-2,4-diene-1,7-dioate isomerase</fullName>
            <shortName>HHDD isomerase</shortName>
            <ecNumber evidence="2">5.3.3.10</ecNumber>
        </recommendedName>
        <alternativeName>
            <fullName>5-carboxymethyl-2-hydroxymuconate Delta-isomerase</fullName>
        </alternativeName>
    </domain>
    <domain>
        <recommendedName>
            <fullName>5-carboxymethyl-2-oxo-hex-3-ene-1,7-dioate decarboxylase</fullName>
            <ecNumber evidence="2">4.1.1.68</ecNumber>
        </recommendedName>
        <alternativeName>
            <fullName evidence="3">5-oxopent-3-ene-1,2,5-tricarboxylate decarboxylase</fullName>
            <shortName>OPET decarboxylase</shortName>
        </alternativeName>
    </domain>
</protein>
<name>HPCE_ECOLX</name>
<comment type="function">
    <text evidence="2">Decarboxylates OPET (5-oxo-pent-3-ene-1,2,5-tricarboxylic acid) into HHDD (2-hydroxy-hept-2,4-diene-1,7-dioate) and isomerizes it to OHED (2-oxo-hept-3-ene-1,7-dioate).</text>
</comment>
<comment type="catalytic activity">
    <reaction evidence="2">
        <text>(2E,4Z)-5-hydroxypenta-2,4-diene-1,2,5-tricarboxylate = (3E,5R)-5-carboxy-2-oxohept-3-enedioate</text>
        <dbReference type="Rhea" id="RHEA:18813"/>
        <dbReference type="ChEBI" id="CHEBI:47961"/>
        <dbReference type="ChEBI" id="CHEBI:87491"/>
        <dbReference type="EC" id="5.3.3.10"/>
    </reaction>
</comment>
<comment type="catalytic activity">
    <reaction evidence="2">
        <text>(3E,5R)-5-carboxy-2-oxohept-3-enedioate + H(+) = (4Z)-2-oxohept-4-enedioate + CO2</text>
        <dbReference type="Rhea" id="RHEA:14397"/>
        <dbReference type="ChEBI" id="CHEBI:15378"/>
        <dbReference type="ChEBI" id="CHEBI:16526"/>
        <dbReference type="ChEBI" id="CHEBI:87491"/>
        <dbReference type="ChEBI" id="CHEBI:87507"/>
        <dbReference type="EC" id="4.1.1.68"/>
    </reaction>
</comment>
<comment type="cofactor">
    <cofactor evidence="1">
        <name>Mg(2+)</name>
        <dbReference type="ChEBI" id="CHEBI:18420"/>
    </cofactor>
</comment>
<comment type="pathway">
    <text>Aromatic compound metabolism; 4-hydroxyphenylacetate degradation; pyruvate and succinate semialdehyde from 4-hydroxyphenylacetate: step 4/7.</text>
</comment>
<comment type="pathway">
    <text>Aromatic compound metabolism; 4-hydroxyphenylacetate degradation; pyruvate and succinate semialdehyde from 4-hydroxyphenylacetate: step 5/7.</text>
</comment>
<comment type="subunit">
    <text evidence="1 2">Monomer.</text>
</comment>
<comment type="similarity">
    <text evidence="4">Belongs to the FAH family.</text>
</comment>
<keyword id="KW-0002">3D-structure</keyword>
<keyword id="KW-0058">Aromatic hydrocarbons catabolism</keyword>
<keyword id="KW-0106">Calcium</keyword>
<keyword id="KW-0903">Direct protein sequencing</keyword>
<keyword id="KW-0413">Isomerase</keyword>
<keyword id="KW-0456">Lyase</keyword>
<keyword id="KW-0460">Magnesium</keyword>
<keyword id="KW-0479">Metal-binding</keyword>
<keyword id="KW-0511">Multifunctional enzyme</keyword>
<keyword id="KW-0677">Repeat</keyword>
<evidence type="ECO:0000269" key="1">
    <source>
    </source>
</evidence>
<evidence type="ECO:0000269" key="2">
    <source>
    </source>
</evidence>
<evidence type="ECO:0000303" key="3">
    <source>
    </source>
</evidence>
<evidence type="ECO:0000305" key="4"/>
<evidence type="ECO:0007744" key="5">
    <source>
        <dbReference type="PDB" id="1GTT"/>
    </source>
</evidence>
<evidence type="ECO:0007744" key="6">
    <source>
        <dbReference type="PDB" id="1I7O"/>
    </source>
</evidence>
<evidence type="ECO:0007829" key="7">
    <source>
        <dbReference type="PDB" id="1GTT"/>
    </source>
</evidence>
<evidence type="ECO:0007829" key="8">
    <source>
        <dbReference type="PDB" id="1I7O"/>
    </source>
</evidence>
<feature type="chain" id="PRO_0000156835" description="Homoprotocatechuate catabolism bifunctional isomerase/decarboxylase">
    <location>
        <begin position="1"/>
        <end position="427"/>
    </location>
</feature>
<feature type="repeat" description="Approximate">
    <location>
        <begin position="1"/>
        <end position="202"/>
    </location>
</feature>
<feature type="repeat" description="Approximate">
    <location>
        <begin position="203"/>
        <end position="405"/>
    </location>
</feature>
<feature type="binding site" evidence="5 6">
    <location>
        <position position="276"/>
    </location>
    <ligand>
        <name>a divalent metal cation</name>
        <dbReference type="ChEBI" id="CHEBI:60240"/>
    </ligand>
</feature>
<feature type="binding site" evidence="5 6">
    <location>
        <position position="278"/>
    </location>
    <ligand>
        <name>a divalent metal cation</name>
        <dbReference type="ChEBI" id="CHEBI:60240"/>
    </ligand>
</feature>
<feature type="binding site" evidence="5 6">
    <location>
        <position position="307"/>
    </location>
    <ligand>
        <name>a divalent metal cation</name>
        <dbReference type="ChEBI" id="CHEBI:60240"/>
    </ligand>
</feature>
<feature type="strand" evidence="7">
    <location>
        <begin position="5"/>
        <end position="10"/>
    </location>
</feature>
<feature type="helix" evidence="7">
    <location>
        <begin position="13"/>
        <end position="19"/>
    </location>
</feature>
<feature type="helix" evidence="7">
    <location>
        <begin position="22"/>
        <end position="24"/>
    </location>
</feature>
<feature type="turn" evidence="7">
    <location>
        <begin position="26"/>
        <end position="28"/>
    </location>
</feature>
<feature type="strand" evidence="7">
    <location>
        <begin position="36"/>
        <end position="40"/>
    </location>
</feature>
<feature type="helix" evidence="7">
    <location>
        <begin position="42"/>
        <end position="44"/>
    </location>
</feature>
<feature type="strand" evidence="7">
    <location>
        <begin position="52"/>
        <end position="54"/>
    </location>
</feature>
<feature type="strand" evidence="8">
    <location>
        <begin position="56"/>
        <end position="58"/>
    </location>
</feature>
<feature type="strand" evidence="7">
    <location>
        <begin position="64"/>
        <end position="70"/>
    </location>
</feature>
<feature type="strand" evidence="7">
    <location>
        <begin position="74"/>
        <end position="76"/>
    </location>
</feature>
<feature type="helix" evidence="7">
    <location>
        <begin position="79"/>
        <end position="85"/>
    </location>
</feature>
<feature type="strand" evidence="7">
    <location>
        <begin position="86"/>
        <end position="93"/>
    </location>
</feature>
<feature type="strand" evidence="7">
    <location>
        <begin position="102"/>
        <end position="104"/>
    </location>
</feature>
<feature type="helix" evidence="7">
    <location>
        <begin position="107"/>
        <end position="110"/>
    </location>
</feature>
<feature type="strand" evidence="7">
    <location>
        <begin position="116"/>
        <end position="118"/>
    </location>
</feature>
<feature type="strand" evidence="7">
    <location>
        <begin position="131"/>
        <end position="136"/>
    </location>
</feature>
<feature type="strand" evidence="7">
    <location>
        <begin position="139"/>
        <end position="145"/>
    </location>
</feature>
<feature type="helix" evidence="7">
    <location>
        <begin position="146"/>
        <end position="148"/>
    </location>
</feature>
<feature type="strand" evidence="7">
    <location>
        <begin position="149"/>
        <end position="151"/>
    </location>
</feature>
<feature type="helix" evidence="7">
    <location>
        <begin position="153"/>
        <end position="161"/>
    </location>
</feature>
<feature type="strand" evidence="7">
    <location>
        <begin position="171"/>
        <end position="173"/>
    </location>
</feature>
<feature type="strand" evidence="7">
    <location>
        <begin position="188"/>
        <end position="193"/>
    </location>
</feature>
<feature type="strand" evidence="7">
    <location>
        <begin position="199"/>
        <end position="205"/>
    </location>
</feature>
<feature type="helix" evidence="7">
    <location>
        <begin position="206"/>
        <end position="208"/>
    </location>
</feature>
<feature type="strand" evidence="7">
    <location>
        <begin position="219"/>
        <end position="221"/>
    </location>
</feature>
<feature type="strand" evidence="7">
    <location>
        <begin position="225"/>
        <end position="230"/>
    </location>
</feature>
<feature type="strand" evidence="7">
    <location>
        <begin position="249"/>
        <end position="252"/>
    </location>
</feature>
<feature type="helix" evidence="7">
    <location>
        <begin position="254"/>
        <end position="256"/>
    </location>
</feature>
<feature type="strand" evidence="7">
    <location>
        <begin position="262"/>
        <end position="266"/>
    </location>
</feature>
<feature type="strand" evidence="7">
    <location>
        <begin position="277"/>
        <end position="283"/>
    </location>
</feature>
<feature type="strand" evidence="7">
    <location>
        <begin position="287"/>
        <end position="289"/>
    </location>
</feature>
<feature type="turn" evidence="7">
    <location>
        <begin position="292"/>
        <end position="294"/>
    </location>
</feature>
<feature type="helix" evidence="7">
    <location>
        <begin position="295"/>
        <end position="298"/>
    </location>
</feature>
<feature type="strand" evidence="7">
    <location>
        <begin position="299"/>
        <end position="306"/>
    </location>
</feature>
<feature type="helix" evidence="7">
    <location>
        <begin position="311"/>
        <end position="313"/>
    </location>
</feature>
<feature type="strand" evidence="7">
    <location>
        <begin position="316"/>
        <end position="320"/>
    </location>
</feature>
<feature type="helix" evidence="7">
    <location>
        <begin position="322"/>
        <end position="325"/>
    </location>
</feature>
<feature type="strand" evidence="7">
    <location>
        <begin position="331"/>
        <end position="333"/>
    </location>
</feature>
<feature type="helix" evidence="7">
    <location>
        <begin position="340"/>
        <end position="342"/>
    </location>
</feature>
<feature type="strand" evidence="7">
    <location>
        <begin position="350"/>
        <end position="355"/>
    </location>
</feature>
<feature type="strand" evidence="7">
    <location>
        <begin position="358"/>
        <end position="364"/>
    </location>
</feature>
<feature type="helix" evidence="7">
    <location>
        <begin position="365"/>
        <end position="367"/>
    </location>
</feature>
<feature type="strand" evidence="7">
    <location>
        <begin position="368"/>
        <end position="370"/>
    </location>
</feature>
<feature type="helix" evidence="7">
    <location>
        <begin position="372"/>
        <end position="380"/>
    </location>
</feature>
<feature type="strand" evidence="7">
    <location>
        <begin position="390"/>
        <end position="392"/>
    </location>
</feature>
<feature type="strand" evidence="7">
    <location>
        <begin position="405"/>
        <end position="410"/>
    </location>
</feature>
<feature type="turn" evidence="7">
    <location>
        <begin position="411"/>
        <end position="413"/>
    </location>
</feature>
<feature type="strand" evidence="7">
    <location>
        <begin position="414"/>
        <end position="422"/>
    </location>
</feature>
<feature type="helix" evidence="7">
    <location>
        <begin position="423"/>
        <end position="426"/>
    </location>
</feature>
<accession>P37352</accession>
<organism>
    <name type="scientific">Escherichia coli</name>
    <dbReference type="NCBI Taxonomy" id="562"/>
    <lineage>
        <taxon>Bacteria</taxon>
        <taxon>Pseudomonadati</taxon>
        <taxon>Pseudomonadota</taxon>
        <taxon>Gammaproteobacteria</taxon>
        <taxon>Enterobacterales</taxon>
        <taxon>Enterobacteriaceae</taxon>
        <taxon>Escherichia</taxon>
    </lineage>
</organism>
<reference key="1">
    <citation type="journal article" date="1993" name="Eur. J. Biochem.">
        <title>Purification, nucleotide sequence and some properties of a bifunctional isomerase/decarboxylase from the homoprotocatechuate degradative pathway of Escherichia coli C.</title>
        <authorList>
            <person name="Roper D.I."/>
            <person name="Cooper R.A."/>
        </authorList>
    </citation>
    <scope>NUCLEOTIDE SEQUENCE [GENOMIC DNA]</scope>
    <scope>PROTEIN SEQUENCE OF 1-20</scope>
    <scope>FUNCTION</scope>
    <scope>CATALYTIC ACTIVITY</scope>
    <scope>SUBUNIT</scope>
    <source>
        <strain>C</strain>
    </source>
</reference>
<reference key="2">
    <citation type="submission" date="2001-03" db="EMBL/GenBank/DDBJ databases">
        <authorList>
            <person name="Roper D.I."/>
        </authorList>
    </citation>
    <scope>SEQUENCE REVISION TO C-TERMINUS</scope>
</reference>
<reference key="3">
    <citation type="journal article" date="1993" name="Mol. Gen. Genet.">
        <title>The Escherichia coli C homoprotocatechuate degradative operon: hpc gene order, direction of transcription and control of expression.</title>
        <authorList>
            <person name="Roper D.I."/>
            <person name="Fawcett T."/>
            <person name="Cooper R.A."/>
        </authorList>
    </citation>
    <scope>NUCLEOTIDE SEQUENCE [GENOMIC DNA] OF 1-7</scope>
    <source>
        <strain>C</strain>
    </source>
</reference>
<reference evidence="5" key="4">
    <citation type="journal article" date="2002" name="Biochemistry">
        <title>The crystal structure of HpcE, a bifunctional decarboxylase/isomerase with a multifunctional fold.</title>
        <authorList>
            <person name="Tame J.R.H."/>
            <person name="Namba K."/>
            <person name="Dodson E.J."/>
            <person name="Roper D.I."/>
        </authorList>
    </citation>
    <scope>X-RAY CRYSTALLOGRAPHY (1.7 ANGSTROMS)</scope>
    <scope>SUBUNIT</scope>
    <scope>COFACTOR</scope>
</reference>
<gene>
    <name type="primary">hpcE</name>
</gene>
<sequence length="427" mass="46878">MKGTIFAVALNHRSQLDAWQEAFQQSPIKAPPKTAVWFIKPRNTVIGCGEPIPFPQGENLLSGATVALIVGKTATKVREEDAAEYIAGYALANDVSLPEESFYRPAIKAKCRDGFCPIGETVALSNVDNLTIYTEINGRPADHWNTSDLQRNAAQLLSALSEFATLNPGDAILLGTPQARVEIQPGDRVRVLAEGFPPLENPVVDEREVTTRKSFPTLPHPHGTLFALGLNYADHASELEFKPPEEPLVFLKAPNTLTGDNQTSVRPNNIEYMHYEAELVVVIGKQARNVSEADAMDYVAGYTVCNDYAIRDYLENYYRPNLRVKSRDGLTPMLSTIVPKEAIPDPHNLTLRTFVNGELRQQGTTADLIFSVPFLIAYLSEFMTLNPGDMIATGTPKGLSDVGDEVVVEVEGVGRLVNRIVSEETAK</sequence>
<proteinExistence type="evidence at protein level"/>
<dbReference type="EC" id="5.3.3.10" evidence="2"/>
<dbReference type="EC" id="4.1.1.68" evidence="2"/>
<dbReference type="EMBL" id="X75028">
    <property type="protein sequence ID" value="CAA52936.2"/>
    <property type="molecule type" value="Genomic_DNA"/>
</dbReference>
<dbReference type="EMBL" id="S56952">
    <property type="protein sequence ID" value="AAB25803.1"/>
    <property type="molecule type" value="Genomic_DNA"/>
</dbReference>
<dbReference type="PIR" id="S38348">
    <property type="entry name" value="S38348"/>
</dbReference>
<dbReference type="PDB" id="1GTT">
    <property type="method" value="X-ray"/>
    <property type="resolution" value="1.70 A"/>
    <property type="chains" value="A/B/C/D=1-427"/>
</dbReference>
<dbReference type="PDB" id="1I7O">
    <property type="method" value="X-ray"/>
    <property type="resolution" value="1.70 A"/>
    <property type="chains" value="A/B/C/D=1-427"/>
</dbReference>
<dbReference type="PDBsum" id="1GTT"/>
<dbReference type="PDBsum" id="1I7O"/>
<dbReference type="SMR" id="P37352"/>
<dbReference type="BRENDA" id="4.1.1.68">
    <property type="organism ID" value="2026"/>
</dbReference>
<dbReference type="UniPathway" id="UPA00208">
    <property type="reaction ID" value="UER00419"/>
</dbReference>
<dbReference type="UniPathway" id="UPA00208">
    <property type="reaction ID" value="UER00420"/>
</dbReference>
<dbReference type="EvolutionaryTrace" id="P37352"/>
<dbReference type="GO" id="GO:0008704">
    <property type="term" value="F:5-carboxymethyl-2-hydroxymuconate delta-isomerase activity"/>
    <property type="evidence" value="ECO:0007669"/>
    <property type="project" value="UniProtKB-EC"/>
</dbReference>
<dbReference type="GO" id="GO:0018800">
    <property type="term" value="F:5-oxopent-3-ene-1,2,5-tricarboxylate decarboxylase activity"/>
    <property type="evidence" value="ECO:0007669"/>
    <property type="project" value="UniProtKB-EC"/>
</dbReference>
<dbReference type="GO" id="GO:0046872">
    <property type="term" value="F:metal ion binding"/>
    <property type="evidence" value="ECO:0007669"/>
    <property type="project" value="UniProtKB-KW"/>
</dbReference>
<dbReference type="GO" id="GO:1901023">
    <property type="term" value="P:4-hydroxyphenylacetate catabolic process"/>
    <property type="evidence" value="ECO:0007669"/>
    <property type="project" value="InterPro"/>
</dbReference>
<dbReference type="FunFam" id="3.90.850.10:FF:000002">
    <property type="entry name" value="2-hydroxyhepta-2,4-diene-1,7-dioate isomerase"/>
    <property type="match status" value="1"/>
</dbReference>
<dbReference type="Gene3D" id="3.90.850.10">
    <property type="entry name" value="Fumarylacetoacetase-like, C-terminal domain"/>
    <property type="match status" value="2"/>
</dbReference>
<dbReference type="InterPro" id="IPR011234">
    <property type="entry name" value="Fumarylacetoacetase-like_C"/>
</dbReference>
<dbReference type="InterPro" id="IPR036663">
    <property type="entry name" value="Fumarylacetoacetase_C_sf"/>
</dbReference>
<dbReference type="InterPro" id="IPR012684">
    <property type="entry name" value="HPA_isomer/decarb_C"/>
</dbReference>
<dbReference type="InterPro" id="IPR012686">
    <property type="entry name" value="HPA_isomer/decarb_N"/>
</dbReference>
<dbReference type="NCBIfam" id="TIGR02303">
    <property type="entry name" value="HpaG-C-term"/>
    <property type="match status" value="1"/>
</dbReference>
<dbReference type="NCBIfam" id="TIGR02305">
    <property type="entry name" value="HpaG-N-term"/>
    <property type="match status" value="1"/>
</dbReference>
<dbReference type="NCBIfam" id="NF011750">
    <property type="entry name" value="PRK15203.1"/>
    <property type="match status" value="1"/>
</dbReference>
<dbReference type="PANTHER" id="PTHR11820:SF114">
    <property type="entry name" value="4-HYDROXYPHENYLACETATE CATABOLISM PROTEIN"/>
    <property type="match status" value="1"/>
</dbReference>
<dbReference type="PANTHER" id="PTHR11820">
    <property type="entry name" value="ACYLPYRUVASE"/>
    <property type="match status" value="1"/>
</dbReference>
<dbReference type="Pfam" id="PF01557">
    <property type="entry name" value="FAA_hydrolase"/>
    <property type="match status" value="2"/>
</dbReference>
<dbReference type="SUPFAM" id="SSF56529">
    <property type="entry name" value="FAH"/>
    <property type="match status" value="2"/>
</dbReference>